<reference key="1">
    <citation type="journal article" date="2000" name="Nature">
        <title>Sequence and analysis of chromosome 1 of the plant Arabidopsis thaliana.</title>
        <authorList>
            <person name="Theologis A."/>
            <person name="Ecker J.R."/>
            <person name="Palm C.J."/>
            <person name="Federspiel N.A."/>
            <person name="Kaul S."/>
            <person name="White O."/>
            <person name="Alonso J."/>
            <person name="Altafi H."/>
            <person name="Araujo R."/>
            <person name="Bowman C.L."/>
            <person name="Brooks S.Y."/>
            <person name="Buehler E."/>
            <person name="Chan A."/>
            <person name="Chao Q."/>
            <person name="Chen H."/>
            <person name="Cheuk R.F."/>
            <person name="Chin C.W."/>
            <person name="Chung M.K."/>
            <person name="Conn L."/>
            <person name="Conway A.B."/>
            <person name="Conway A.R."/>
            <person name="Creasy T.H."/>
            <person name="Dewar K."/>
            <person name="Dunn P."/>
            <person name="Etgu P."/>
            <person name="Feldblyum T.V."/>
            <person name="Feng J.-D."/>
            <person name="Fong B."/>
            <person name="Fujii C.Y."/>
            <person name="Gill J.E."/>
            <person name="Goldsmith A.D."/>
            <person name="Haas B."/>
            <person name="Hansen N.F."/>
            <person name="Hughes B."/>
            <person name="Huizar L."/>
            <person name="Hunter J.L."/>
            <person name="Jenkins J."/>
            <person name="Johnson-Hopson C."/>
            <person name="Khan S."/>
            <person name="Khaykin E."/>
            <person name="Kim C.J."/>
            <person name="Koo H.L."/>
            <person name="Kremenetskaia I."/>
            <person name="Kurtz D.B."/>
            <person name="Kwan A."/>
            <person name="Lam B."/>
            <person name="Langin-Hooper S."/>
            <person name="Lee A."/>
            <person name="Lee J.M."/>
            <person name="Lenz C.A."/>
            <person name="Li J.H."/>
            <person name="Li Y.-P."/>
            <person name="Lin X."/>
            <person name="Liu S.X."/>
            <person name="Liu Z.A."/>
            <person name="Luros J.S."/>
            <person name="Maiti R."/>
            <person name="Marziali A."/>
            <person name="Militscher J."/>
            <person name="Miranda M."/>
            <person name="Nguyen M."/>
            <person name="Nierman W.C."/>
            <person name="Osborne B.I."/>
            <person name="Pai G."/>
            <person name="Peterson J."/>
            <person name="Pham P.K."/>
            <person name="Rizzo M."/>
            <person name="Rooney T."/>
            <person name="Rowley D."/>
            <person name="Sakano H."/>
            <person name="Salzberg S.L."/>
            <person name="Schwartz J.R."/>
            <person name="Shinn P."/>
            <person name="Southwick A.M."/>
            <person name="Sun H."/>
            <person name="Tallon L.J."/>
            <person name="Tambunga G."/>
            <person name="Toriumi M.J."/>
            <person name="Town C.D."/>
            <person name="Utterback T."/>
            <person name="Van Aken S."/>
            <person name="Vaysberg M."/>
            <person name="Vysotskaia V.S."/>
            <person name="Walker M."/>
            <person name="Wu D."/>
            <person name="Yu G."/>
            <person name="Fraser C.M."/>
            <person name="Venter J.C."/>
            <person name="Davis R.W."/>
        </authorList>
    </citation>
    <scope>NUCLEOTIDE SEQUENCE [LARGE SCALE GENOMIC DNA]</scope>
    <source>
        <strain>cv. Columbia</strain>
    </source>
</reference>
<reference key="2">
    <citation type="journal article" date="2017" name="Plant J.">
        <title>Araport11: a complete reannotation of the Arabidopsis thaliana reference genome.</title>
        <authorList>
            <person name="Cheng C.Y."/>
            <person name="Krishnakumar V."/>
            <person name="Chan A.P."/>
            <person name="Thibaud-Nissen F."/>
            <person name="Schobel S."/>
            <person name="Town C.D."/>
        </authorList>
    </citation>
    <scope>GENOME REANNOTATION</scope>
    <source>
        <strain>cv. Columbia</strain>
    </source>
</reference>
<reference key="3">
    <citation type="journal article" date="2004" name="Genome Res.">
        <title>Whole genome sequence comparisons and 'full-length' cDNA sequences: a combined approach to evaluate and improve Arabidopsis genome annotation.</title>
        <authorList>
            <person name="Castelli V."/>
            <person name="Aury J.-M."/>
            <person name="Jaillon O."/>
            <person name="Wincker P."/>
            <person name="Clepet C."/>
            <person name="Menard M."/>
            <person name="Cruaud C."/>
            <person name="Quetier F."/>
            <person name="Scarpelli C."/>
            <person name="Schaechter V."/>
            <person name="Temple G."/>
            <person name="Caboche M."/>
            <person name="Weissenbach J."/>
            <person name="Salanoubat M."/>
        </authorList>
    </citation>
    <scope>NUCLEOTIDE SEQUENCE [LARGE SCALE MRNA]</scope>
    <source>
        <strain>cv. Columbia</strain>
    </source>
</reference>
<reference key="4">
    <citation type="journal article" date="2001" name="J. Biol. Chem.">
        <title>Phylogenetic analysis of the UDP-glycosyltransferase multigene family of Arabidopsis thaliana.</title>
        <authorList>
            <person name="Li Y."/>
            <person name="Baldauf S."/>
            <person name="Lim E.K."/>
            <person name="Bowles D.J."/>
        </authorList>
    </citation>
    <scope>GENE FAMILY</scope>
</reference>
<gene>
    <name type="primary">UGT79B10</name>
    <name type="ordered locus">At1g64910</name>
    <name type="ORF">F13O11.21</name>
</gene>
<feature type="chain" id="PRO_0000409116" description="UDP-glycosyltransferase 79B10">
    <location>
        <begin position="1"/>
        <end position="447"/>
    </location>
</feature>
<feature type="binding site" evidence="1">
    <location>
        <position position="260"/>
    </location>
    <ligand>
        <name>UDP-alpha-D-glucose</name>
        <dbReference type="ChEBI" id="CHEBI:58885"/>
    </ligand>
</feature>
<feature type="binding site" evidence="1">
    <location>
        <begin position="319"/>
        <end position="321"/>
    </location>
    <ligand>
        <name>UDP-alpha-D-glucose</name>
        <dbReference type="ChEBI" id="CHEBI:58885"/>
    </ligand>
</feature>
<feature type="binding site" evidence="1">
    <location>
        <begin position="336"/>
        <end position="344"/>
    </location>
    <ligand>
        <name>UDP-alpha-D-glucose</name>
        <dbReference type="ChEBI" id="CHEBI:58885"/>
    </ligand>
</feature>
<feature type="binding site" evidence="1">
    <location>
        <begin position="358"/>
        <end position="361"/>
    </location>
    <ligand>
        <name>UDP-alpha-D-glucose</name>
        <dbReference type="ChEBI" id="CHEBI:58885"/>
    </ligand>
</feature>
<evidence type="ECO:0000250" key="1"/>
<evidence type="ECO:0000305" key="2"/>
<proteinExistence type="evidence at transcript level"/>
<dbReference type="EC" id="2.4.1.-"/>
<dbReference type="EMBL" id="AC006193">
    <property type="protein sequence ID" value="AAD38265.1"/>
    <property type="molecule type" value="Genomic_DNA"/>
</dbReference>
<dbReference type="EMBL" id="CP002684">
    <property type="protein sequence ID" value="AEE34304.1"/>
    <property type="molecule type" value="Genomic_DNA"/>
</dbReference>
<dbReference type="EMBL" id="BX816826">
    <property type="status" value="NOT_ANNOTATED_CDS"/>
    <property type="molecule type" value="mRNA"/>
</dbReference>
<dbReference type="PIR" id="E96672">
    <property type="entry name" value="E96672"/>
</dbReference>
<dbReference type="RefSeq" id="NP_176671.1">
    <property type="nucleotide sequence ID" value="NM_105165.4"/>
</dbReference>
<dbReference type="SMR" id="Q9XIQ5"/>
<dbReference type="FunCoup" id="Q9XIQ5">
    <property type="interactions" value="10"/>
</dbReference>
<dbReference type="STRING" id="3702.Q9XIQ5"/>
<dbReference type="CAZy" id="GT1">
    <property type="family name" value="Glycosyltransferase Family 1"/>
</dbReference>
<dbReference type="GlyGen" id="Q9XIQ5">
    <property type="glycosylation" value="1 site"/>
</dbReference>
<dbReference type="PaxDb" id="3702-AT1G64910.1"/>
<dbReference type="ProteomicsDB" id="228520"/>
<dbReference type="EnsemblPlants" id="AT1G64910.1">
    <property type="protein sequence ID" value="AT1G64910.1"/>
    <property type="gene ID" value="AT1G64910"/>
</dbReference>
<dbReference type="GeneID" id="842799"/>
<dbReference type="Gramene" id="AT1G64910.1">
    <property type="protein sequence ID" value="AT1G64910.1"/>
    <property type="gene ID" value="AT1G64910"/>
</dbReference>
<dbReference type="KEGG" id="ath:AT1G64910"/>
<dbReference type="Araport" id="AT1G64910"/>
<dbReference type="TAIR" id="AT1G64910"/>
<dbReference type="eggNOG" id="KOG1192">
    <property type="taxonomic scope" value="Eukaryota"/>
</dbReference>
<dbReference type="HOGENOM" id="CLU_001724_2_3_1"/>
<dbReference type="InParanoid" id="Q9XIQ5"/>
<dbReference type="OMA" id="GHMTPYV"/>
<dbReference type="OrthoDB" id="5835829at2759"/>
<dbReference type="PhylomeDB" id="Q9XIQ5"/>
<dbReference type="BioCyc" id="ARA:AT1G64910-MONOMER"/>
<dbReference type="PRO" id="PR:Q9XIQ5"/>
<dbReference type="Proteomes" id="UP000006548">
    <property type="component" value="Chromosome 1"/>
</dbReference>
<dbReference type="ExpressionAtlas" id="Q9XIQ5">
    <property type="expression patterns" value="baseline and differential"/>
</dbReference>
<dbReference type="GO" id="GO:0035251">
    <property type="term" value="F:UDP-glucosyltransferase activity"/>
    <property type="evidence" value="ECO:0007669"/>
    <property type="project" value="InterPro"/>
</dbReference>
<dbReference type="CDD" id="cd03784">
    <property type="entry name" value="GT1_Gtf-like"/>
    <property type="match status" value="1"/>
</dbReference>
<dbReference type="FunFam" id="3.40.50.2000:FF:000037">
    <property type="entry name" value="Glycosyltransferase"/>
    <property type="match status" value="1"/>
</dbReference>
<dbReference type="FunFam" id="3.40.50.2000:FF:000087">
    <property type="entry name" value="Glycosyltransferase"/>
    <property type="match status" value="1"/>
</dbReference>
<dbReference type="Gene3D" id="3.40.50.2000">
    <property type="entry name" value="Glycogen Phosphorylase B"/>
    <property type="match status" value="2"/>
</dbReference>
<dbReference type="InterPro" id="IPR050481">
    <property type="entry name" value="UDP-glycosyltransf_plant"/>
</dbReference>
<dbReference type="InterPro" id="IPR002213">
    <property type="entry name" value="UDP_glucos_trans"/>
</dbReference>
<dbReference type="InterPro" id="IPR035595">
    <property type="entry name" value="UDP_glycos_trans_CS"/>
</dbReference>
<dbReference type="PANTHER" id="PTHR48049:SF176">
    <property type="entry name" value="ANTHOCYANIDIN 3-O-GLUCOSIDE 2'''-O-XYLOSYLTRANSFERASE-RELATED"/>
    <property type="match status" value="1"/>
</dbReference>
<dbReference type="PANTHER" id="PTHR48049">
    <property type="entry name" value="GLYCOSYLTRANSFERASE"/>
    <property type="match status" value="1"/>
</dbReference>
<dbReference type="Pfam" id="PF00201">
    <property type="entry name" value="UDPGT"/>
    <property type="match status" value="1"/>
</dbReference>
<dbReference type="SUPFAM" id="SSF53756">
    <property type="entry name" value="UDP-Glycosyltransferase/glycogen phosphorylase"/>
    <property type="match status" value="1"/>
</dbReference>
<dbReference type="PROSITE" id="PS00375">
    <property type="entry name" value="UDPGT"/>
    <property type="match status" value="1"/>
</dbReference>
<accession>Q9XIQ5</accession>
<comment type="similarity">
    <text evidence="2">Belongs to the UDP-glycosyltransferase family.</text>
</comment>
<comment type="sequence caution" evidence="2">
    <conflict type="miscellaneous discrepancy">
        <sequence resource="EMBL" id="BX816826"/>
    </conflict>
    <text>Sequencing errors.</text>
</comment>
<name>U7B10_ARATH</name>
<protein>
    <recommendedName>
        <fullName>UDP-glycosyltransferase 79B10</fullName>
        <ecNumber>2.4.1.-</ecNumber>
    </recommendedName>
</protein>
<organism>
    <name type="scientific">Arabidopsis thaliana</name>
    <name type="common">Mouse-ear cress</name>
    <dbReference type="NCBI Taxonomy" id="3702"/>
    <lineage>
        <taxon>Eukaryota</taxon>
        <taxon>Viridiplantae</taxon>
        <taxon>Streptophyta</taxon>
        <taxon>Embryophyta</taxon>
        <taxon>Tracheophyta</taxon>
        <taxon>Spermatophyta</taxon>
        <taxon>Magnoliopsida</taxon>
        <taxon>eudicotyledons</taxon>
        <taxon>Gunneridae</taxon>
        <taxon>Pentapetalae</taxon>
        <taxon>rosids</taxon>
        <taxon>malvids</taxon>
        <taxon>Brassicales</taxon>
        <taxon>Brassicaceae</taxon>
        <taxon>Camelineae</taxon>
        <taxon>Arabidopsis</taxon>
    </lineage>
</organism>
<sequence>MGQTFHAFMFPWFAFGHMTPYLHLANKLAERGHRITFLIPKKAQKQLEHLNLFPDSIVFHSLTIPHVDGLPAGAETFSDIPMPLWKFLPPAIDLTRDQVEAAVSALSPDLILFDIASWVPEVAKEYRVKSMLYNIISATSIAHDFVPGGELGVPPPGYPSSKLLYRKHDAHALLSFSVYYKRFSHRLITGLMNCDFISIRTCKEIEGKFCEYLERQYHKKVFLTGPMLPEPNKGKPLEDRWSHWLNGFEQGSVVFCALGSQVTLEKDQFQELCLGIELTGLPFFVAVTPPKGAKTIQDALPEGFEERVKDRGVVLGEWVQQPLLLAHPSVGCFLSHCGFGSMWESIMSDCQIVLLPFLADQVLNTRLMTEELKVSVEVQREETGWFSKESLSVAITSVMDQASEIGNLVRRNHSKLKEVLVSDGLLTGYTDKFVDTLENLVSETKRE</sequence>
<keyword id="KW-0328">Glycosyltransferase</keyword>
<keyword id="KW-1185">Reference proteome</keyword>
<keyword id="KW-0808">Transferase</keyword>